<proteinExistence type="inferred from homology"/>
<organism>
    <name type="scientific">Mycobacterium tuberculosis (strain ATCC 25177 / H37Ra)</name>
    <dbReference type="NCBI Taxonomy" id="419947"/>
    <lineage>
        <taxon>Bacteria</taxon>
        <taxon>Bacillati</taxon>
        <taxon>Actinomycetota</taxon>
        <taxon>Actinomycetes</taxon>
        <taxon>Mycobacteriales</taxon>
        <taxon>Mycobacteriaceae</taxon>
        <taxon>Mycobacterium</taxon>
        <taxon>Mycobacterium tuberculosis complex</taxon>
    </lineage>
</organism>
<comment type="function">
    <text evidence="1">Probable oxidase that might be involved in lipid metabolism.</text>
</comment>
<comment type="cofactor">
    <cofactor evidence="1">
        <name>Fe cation</name>
        <dbReference type="ChEBI" id="CHEBI:24875"/>
    </cofactor>
    <text evidence="1">Binds 1 Fe cation per subunit.</text>
</comment>
<comment type="cofactor">
    <cofactor evidence="1">
        <name>Mn(2+)</name>
        <dbReference type="ChEBI" id="CHEBI:29035"/>
    </cofactor>
    <text evidence="1">Binds 1 manganese ion per subunit. The iron and manganese ions form a dinuclear manganese-iron cluster.</text>
</comment>
<comment type="subunit">
    <text evidence="1">Homodimer.</text>
</comment>
<comment type="similarity">
    <text evidence="2">Belongs to the ribonucleoside diphosphate reductase small chain family. R2-like ligand binding oxidase subfamily.</text>
</comment>
<evidence type="ECO:0000250" key="1">
    <source>
        <dbReference type="UniProtKB" id="P9WH69"/>
    </source>
</evidence>
<evidence type="ECO:0000305" key="2"/>
<gene>
    <name type="ordered locus">MRA_0241</name>
</gene>
<reference key="1">
    <citation type="journal article" date="2008" name="PLoS ONE">
        <title>Genetic basis of virulence attenuation revealed by comparative genomic analysis of Mycobacterium tuberculosis strain H37Ra versus H37Rv.</title>
        <authorList>
            <person name="Zheng H."/>
            <person name="Lu L."/>
            <person name="Wang B."/>
            <person name="Pu S."/>
            <person name="Zhang X."/>
            <person name="Zhu G."/>
            <person name="Shi W."/>
            <person name="Zhang L."/>
            <person name="Wang H."/>
            <person name="Wang S."/>
            <person name="Zhao G."/>
            <person name="Zhang Y."/>
        </authorList>
    </citation>
    <scope>NUCLEOTIDE SEQUENCE [LARGE SCALE GENOMIC DNA]</scope>
    <source>
        <strain>ATCC 25177 / H37Ra</strain>
    </source>
</reference>
<name>RIR2H_MYCTA</name>
<keyword id="KW-0408">Iron</keyword>
<keyword id="KW-0464">Manganese</keyword>
<keyword id="KW-0479">Metal-binding</keyword>
<keyword id="KW-0560">Oxidoreductase</keyword>
<keyword id="KW-1185">Reference proteome</keyword>
<sequence>MTRTRSGSLAAGGLNWASLPLKLFAGGNAKFWHPADIDFTRDRADWEKLSDDERDYATRLCTQFIAGEEAVTEDIQPFMSAMRAEGRLADEMYLTQFAFEEAKHTQVFRMWLDAVGISEDLHRYLDDLPAYRQIFYAELPECLNALSADPSPAAQVRASVTYNHIVEGMLALTGYYAWHKICVERAILPGMQELVRRIGDDERRHMAWGTFTCRRHVAADDANWTVFETRMNELIPLALRLIEEGFALYGDQPPFDLSKDDFLQYSTDKGMRRFGTISNARGRPVAEIDVDYSPAQLEDTFADEDRRTLAAASA</sequence>
<accession>A5TYV8</accession>
<dbReference type="EC" id="1.-.-.-" evidence="1"/>
<dbReference type="EMBL" id="CP000611">
    <property type="protein sequence ID" value="ABQ71958.1"/>
    <property type="molecule type" value="Genomic_DNA"/>
</dbReference>
<dbReference type="RefSeq" id="WP_003911100.1">
    <property type="nucleotide sequence ID" value="NZ_CP016972.1"/>
</dbReference>
<dbReference type="SMR" id="A5TYV8"/>
<dbReference type="KEGG" id="mra:MRA_0241"/>
<dbReference type="eggNOG" id="COG0208">
    <property type="taxonomic scope" value="Bacteria"/>
</dbReference>
<dbReference type="HOGENOM" id="CLU_072736_0_0_11"/>
<dbReference type="Proteomes" id="UP000001988">
    <property type="component" value="Chromosome"/>
</dbReference>
<dbReference type="GO" id="GO:0046872">
    <property type="term" value="F:metal ion binding"/>
    <property type="evidence" value="ECO:0007669"/>
    <property type="project" value="UniProtKB-KW"/>
</dbReference>
<dbReference type="GO" id="GO:0016491">
    <property type="term" value="F:oxidoreductase activity"/>
    <property type="evidence" value="ECO:0007669"/>
    <property type="project" value="UniProtKB-KW"/>
</dbReference>
<dbReference type="GO" id="GO:0009263">
    <property type="term" value="P:deoxyribonucleotide biosynthetic process"/>
    <property type="evidence" value="ECO:0007669"/>
    <property type="project" value="InterPro"/>
</dbReference>
<dbReference type="CDD" id="cd07911">
    <property type="entry name" value="RNRR2_Rv0233_like"/>
    <property type="match status" value="1"/>
</dbReference>
<dbReference type="Gene3D" id="1.10.620.20">
    <property type="entry name" value="Ribonucleotide Reductase, subunit A"/>
    <property type="match status" value="1"/>
</dbReference>
<dbReference type="InterPro" id="IPR009078">
    <property type="entry name" value="Ferritin-like_SF"/>
</dbReference>
<dbReference type="InterPro" id="IPR033908">
    <property type="entry name" value="R2LOX"/>
</dbReference>
<dbReference type="InterPro" id="IPR012348">
    <property type="entry name" value="RNR-like"/>
</dbReference>
<dbReference type="InterPro" id="IPR000358">
    <property type="entry name" value="RNR_small_fam"/>
</dbReference>
<dbReference type="NCBIfam" id="NF006199">
    <property type="entry name" value="PRK08326.1-2"/>
    <property type="match status" value="1"/>
</dbReference>
<dbReference type="NCBIfam" id="NF006200">
    <property type="entry name" value="PRK08326.1-3"/>
    <property type="match status" value="1"/>
</dbReference>
<dbReference type="NCBIfam" id="NF006201">
    <property type="entry name" value="PRK08326.1-4"/>
    <property type="match status" value="1"/>
</dbReference>
<dbReference type="Pfam" id="PF00268">
    <property type="entry name" value="Ribonuc_red_sm"/>
    <property type="match status" value="1"/>
</dbReference>
<dbReference type="SUPFAM" id="SSF47240">
    <property type="entry name" value="Ferritin-like"/>
    <property type="match status" value="1"/>
</dbReference>
<feature type="chain" id="PRO_0000375433" description="R2-like ligand binding oxidase">
    <location>
        <begin position="1"/>
        <end position="314"/>
    </location>
</feature>
<feature type="binding site" evidence="1">
    <location>
        <position position="68"/>
    </location>
    <ligand>
        <name>Mn(2+)</name>
        <dbReference type="ChEBI" id="CHEBI:29035"/>
    </ligand>
</feature>
<feature type="binding site" evidence="1">
    <location>
        <position position="101"/>
    </location>
    <ligand>
        <name>Fe cation</name>
        <dbReference type="ChEBI" id="CHEBI:24875"/>
    </ligand>
</feature>
<feature type="binding site" evidence="1">
    <location>
        <position position="101"/>
    </location>
    <ligand>
        <name>Mn(2+)</name>
        <dbReference type="ChEBI" id="CHEBI:29035"/>
    </ligand>
</feature>
<feature type="binding site" evidence="1">
    <location>
        <position position="104"/>
    </location>
    <ligand>
        <name>Mn(2+)</name>
        <dbReference type="ChEBI" id="CHEBI:29035"/>
    </ligand>
</feature>
<feature type="binding site" evidence="1">
    <location>
        <position position="167"/>
    </location>
    <ligand>
        <name>Fe cation</name>
        <dbReference type="ChEBI" id="CHEBI:24875"/>
    </ligand>
</feature>
<feature type="binding site" evidence="1">
    <location>
        <position position="202"/>
    </location>
    <ligand>
        <name>Fe cation</name>
        <dbReference type="ChEBI" id="CHEBI:24875"/>
    </ligand>
</feature>
<feature type="binding site" evidence="1">
    <location>
        <position position="205"/>
    </location>
    <ligand>
        <name>Fe cation</name>
        <dbReference type="ChEBI" id="CHEBI:24875"/>
    </ligand>
</feature>
<feature type="cross-link" description="3-(O4'-tyrosyl)-valine (Val-Tyr)" evidence="1">
    <location>
        <begin position="71"/>
        <end position="162"/>
    </location>
</feature>
<protein>
    <recommendedName>
        <fullName evidence="1">R2-like ligand binding oxidase</fullName>
        <ecNumber evidence="1">1.-.-.-</ecNumber>
    </recommendedName>
    <alternativeName>
        <fullName>Ribonucleotide reductase R2 subunit homolog</fullName>
    </alternativeName>
    <alternativeName>
        <fullName>Ribonucleotide reductase small subunit homolog</fullName>
    </alternativeName>
</protein>